<feature type="chain" id="PRO_1000163988" description="Ornithine carbamoyltransferase">
    <location>
        <begin position="1"/>
        <end position="338"/>
    </location>
</feature>
<feature type="binding site" evidence="2">
    <location>
        <begin position="58"/>
        <end position="61"/>
    </location>
    <ligand>
        <name>carbamoyl phosphate</name>
        <dbReference type="ChEBI" id="CHEBI:58228"/>
    </ligand>
</feature>
<feature type="binding site" evidence="2">
    <location>
        <position position="85"/>
    </location>
    <ligand>
        <name>carbamoyl phosphate</name>
        <dbReference type="ChEBI" id="CHEBI:58228"/>
    </ligand>
</feature>
<feature type="binding site" evidence="2">
    <location>
        <position position="109"/>
    </location>
    <ligand>
        <name>carbamoyl phosphate</name>
        <dbReference type="ChEBI" id="CHEBI:58228"/>
    </ligand>
</feature>
<feature type="binding site" evidence="2">
    <location>
        <begin position="136"/>
        <end position="139"/>
    </location>
    <ligand>
        <name>carbamoyl phosphate</name>
        <dbReference type="ChEBI" id="CHEBI:58228"/>
    </ligand>
</feature>
<feature type="binding site" evidence="2">
    <location>
        <position position="168"/>
    </location>
    <ligand>
        <name>L-ornithine</name>
        <dbReference type="ChEBI" id="CHEBI:46911"/>
    </ligand>
</feature>
<feature type="binding site" evidence="2">
    <location>
        <position position="232"/>
    </location>
    <ligand>
        <name>L-ornithine</name>
        <dbReference type="ChEBI" id="CHEBI:46911"/>
    </ligand>
</feature>
<feature type="binding site" evidence="2">
    <location>
        <begin position="236"/>
        <end position="237"/>
    </location>
    <ligand>
        <name>L-ornithine</name>
        <dbReference type="ChEBI" id="CHEBI:46911"/>
    </ligand>
</feature>
<feature type="binding site" evidence="2">
    <location>
        <begin position="273"/>
        <end position="274"/>
    </location>
    <ligand>
        <name>carbamoyl phosphate</name>
        <dbReference type="ChEBI" id="CHEBI:58228"/>
    </ligand>
</feature>
<feature type="binding site" evidence="2">
    <location>
        <position position="318"/>
    </location>
    <ligand>
        <name>carbamoyl phosphate</name>
        <dbReference type="ChEBI" id="CHEBI:58228"/>
    </ligand>
</feature>
<gene>
    <name evidence="2" type="primary">arcB</name>
    <name type="ordered locus">SPJ_2174</name>
</gene>
<protein>
    <recommendedName>
        <fullName evidence="2">Ornithine carbamoyltransferase</fullName>
        <shortName evidence="2">OTCase</shortName>
        <ecNumber evidence="2">2.1.3.3</ecNumber>
    </recommendedName>
</protein>
<dbReference type="EC" id="2.1.3.3" evidence="2"/>
<dbReference type="EMBL" id="CP000919">
    <property type="protein sequence ID" value="ACO19775.1"/>
    <property type="molecule type" value="Genomic_DNA"/>
</dbReference>
<dbReference type="SMR" id="C1CHE7"/>
<dbReference type="KEGG" id="sjj:SPJ_2174"/>
<dbReference type="HOGENOM" id="CLU_043846_3_1_9"/>
<dbReference type="UniPathway" id="UPA00254">
    <property type="reaction ID" value="UER00365"/>
</dbReference>
<dbReference type="Proteomes" id="UP000002206">
    <property type="component" value="Chromosome"/>
</dbReference>
<dbReference type="GO" id="GO:0005737">
    <property type="term" value="C:cytoplasm"/>
    <property type="evidence" value="ECO:0007669"/>
    <property type="project" value="UniProtKB-SubCell"/>
</dbReference>
<dbReference type="GO" id="GO:0016597">
    <property type="term" value="F:amino acid binding"/>
    <property type="evidence" value="ECO:0007669"/>
    <property type="project" value="InterPro"/>
</dbReference>
<dbReference type="GO" id="GO:0004585">
    <property type="term" value="F:ornithine carbamoyltransferase activity"/>
    <property type="evidence" value="ECO:0007669"/>
    <property type="project" value="UniProtKB-UniRule"/>
</dbReference>
<dbReference type="GO" id="GO:0042450">
    <property type="term" value="P:arginine biosynthetic process via ornithine"/>
    <property type="evidence" value="ECO:0007669"/>
    <property type="project" value="TreeGrafter"/>
</dbReference>
<dbReference type="GO" id="GO:0019547">
    <property type="term" value="P:arginine catabolic process to ornithine"/>
    <property type="evidence" value="ECO:0007669"/>
    <property type="project" value="UniProtKB-UniRule"/>
</dbReference>
<dbReference type="GO" id="GO:0019240">
    <property type="term" value="P:citrulline biosynthetic process"/>
    <property type="evidence" value="ECO:0007669"/>
    <property type="project" value="TreeGrafter"/>
</dbReference>
<dbReference type="FunFam" id="3.40.50.1370:FF:000004">
    <property type="entry name" value="Ornithine carbamoyltransferase"/>
    <property type="match status" value="1"/>
</dbReference>
<dbReference type="Gene3D" id="3.40.50.1370">
    <property type="entry name" value="Aspartate/ornithine carbamoyltransferase"/>
    <property type="match status" value="2"/>
</dbReference>
<dbReference type="HAMAP" id="MF_01109">
    <property type="entry name" value="OTCase"/>
    <property type="match status" value="1"/>
</dbReference>
<dbReference type="InterPro" id="IPR006132">
    <property type="entry name" value="Asp/Orn_carbamoyltranf_P-bd"/>
</dbReference>
<dbReference type="InterPro" id="IPR006130">
    <property type="entry name" value="Asp/Orn_carbamoylTrfase"/>
</dbReference>
<dbReference type="InterPro" id="IPR036901">
    <property type="entry name" value="Asp/Orn_carbamoylTrfase_sf"/>
</dbReference>
<dbReference type="InterPro" id="IPR006131">
    <property type="entry name" value="Asp_carbamoyltransf_Asp/Orn-bd"/>
</dbReference>
<dbReference type="InterPro" id="IPR002292">
    <property type="entry name" value="Orn/put_carbamltrans"/>
</dbReference>
<dbReference type="InterPro" id="IPR024904">
    <property type="entry name" value="OTCase_ArgI"/>
</dbReference>
<dbReference type="NCBIfam" id="TIGR00658">
    <property type="entry name" value="orni_carb_tr"/>
    <property type="match status" value="1"/>
</dbReference>
<dbReference type="NCBIfam" id="NF001986">
    <property type="entry name" value="PRK00779.1"/>
    <property type="match status" value="1"/>
</dbReference>
<dbReference type="PANTHER" id="PTHR45753:SF1">
    <property type="entry name" value="ORNITHINE CARBAMOYLTRANSFERASE, CATABOLIC"/>
    <property type="match status" value="1"/>
</dbReference>
<dbReference type="PANTHER" id="PTHR45753">
    <property type="entry name" value="ORNITHINE CARBAMOYLTRANSFERASE, MITOCHONDRIAL"/>
    <property type="match status" value="1"/>
</dbReference>
<dbReference type="Pfam" id="PF00185">
    <property type="entry name" value="OTCace"/>
    <property type="match status" value="1"/>
</dbReference>
<dbReference type="Pfam" id="PF02729">
    <property type="entry name" value="OTCace_N"/>
    <property type="match status" value="1"/>
</dbReference>
<dbReference type="PRINTS" id="PR00100">
    <property type="entry name" value="AOTCASE"/>
</dbReference>
<dbReference type="PRINTS" id="PR00102">
    <property type="entry name" value="OTCASE"/>
</dbReference>
<dbReference type="SUPFAM" id="SSF53671">
    <property type="entry name" value="Aspartate/ornithine carbamoyltransferase"/>
    <property type="match status" value="1"/>
</dbReference>
<dbReference type="PROSITE" id="PS00097">
    <property type="entry name" value="CARBAMOYLTRANSFERASE"/>
    <property type="match status" value="1"/>
</dbReference>
<keyword id="KW-0056">Arginine metabolism</keyword>
<keyword id="KW-0963">Cytoplasm</keyword>
<keyword id="KW-0808">Transferase</keyword>
<organism>
    <name type="scientific">Streptococcus pneumoniae (strain JJA)</name>
    <dbReference type="NCBI Taxonomy" id="488222"/>
    <lineage>
        <taxon>Bacteria</taxon>
        <taxon>Bacillati</taxon>
        <taxon>Bacillota</taxon>
        <taxon>Bacilli</taxon>
        <taxon>Lactobacillales</taxon>
        <taxon>Streptococcaceae</taxon>
        <taxon>Streptococcus</taxon>
    </lineage>
</organism>
<name>OTC_STRZJ</name>
<evidence type="ECO:0000250" key="1"/>
<evidence type="ECO:0000255" key="2">
    <source>
        <dbReference type="HAMAP-Rule" id="MF_01109"/>
    </source>
</evidence>
<accession>C1CHE7</accession>
<sequence>MTNSVFQGRSFLAEKDFTRAELEYLIGLSAHLKDLKKRNIQHHYLAGKNIALLFEKTSTRTRAAFTTAAIDLGAHPEYLGANDIQLGKKESTEDTAKVLGRMFDGIEFRGFSQRMVEELAEFSGVPVWNGLTDEWHPTQMLADYLTVQENFGRLEGLTLVYCGDGRNNVANSLLVTGAILGVNVHIFSPKELFPEKEIVELAEGFAKESGAHVLITEDADEAVKDADVLYTDVWVSMGEEDKFAERVALLKPYQVNMDLVKKAGNENLIFLHCLPAFHDTHTVYGKDVAEKFGVEEMEVTDEVFRSKYARHFDQAENRMHTIKAVMAATLGNLYIPKV</sequence>
<reference key="1">
    <citation type="journal article" date="2010" name="Genome Biol.">
        <title>Structure and dynamics of the pan-genome of Streptococcus pneumoniae and closely related species.</title>
        <authorList>
            <person name="Donati C."/>
            <person name="Hiller N.L."/>
            <person name="Tettelin H."/>
            <person name="Muzzi A."/>
            <person name="Croucher N.J."/>
            <person name="Angiuoli S.V."/>
            <person name="Oggioni M."/>
            <person name="Dunning Hotopp J.C."/>
            <person name="Hu F.Z."/>
            <person name="Riley D.R."/>
            <person name="Covacci A."/>
            <person name="Mitchell T.J."/>
            <person name="Bentley S.D."/>
            <person name="Kilian M."/>
            <person name="Ehrlich G.D."/>
            <person name="Rappuoli R."/>
            <person name="Moxon E.R."/>
            <person name="Masignani V."/>
        </authorList>
    </citation>
    <scope>NUCLEOTIDE SEQUENCE [LARGE SCALE GENOMIC DNA]</scope>
    <source>
        <strain>JJA</strain>
    </source>
</reference>
<proteinExistence type="inferred from homology"/>
<comment type="function">
    <text evidence="1">Reversibly catalyzes the transfer of the carbamoyl group from carbamoyl phosphate (CP) to the N(epsilon) atom of ornithine (ORN) to produce L-citrulline.</text>
</comment>
<comment type="catalytic activity">
    <reaction evidence="2">
        <text>carbamoyl phosphate + L-ornithine = L-citrulline + phosphate + H(+)</text>
        <dbReference type="Rhea" id="RHEA:19513"/>
        <dbReference type="ChEBI" id="CHEBI:15378"/>
        <dbReference type="ChEBI" id="CHEBI:43474"/>
        <dbReference type="ChEBI" id="CHEBI:46911"/>
        <dbReference type="ChEBI" id="CHEBI:57743"/>
        <dbReference type="ChEBI" id="CHEBI:58228"/>
        <dbReference type="EC" id="2.1.3.3"/>
    </reaction>
</comment>
<comment type="pathway">
    <text evidence="2">Amino-acid degradation; L-arginine degradation via ADI pathway; carbamoyl phosphate from L-arginine: step 2/2.</text>
</comment>
<comment type="subcellular location">
    <subcellularLocation>
        <location evidence="2">Cytoplasm</location>
    </subcellularLocation>
</comment>
<comment type="similarity">
    <text evidence="2">Belongs to the aspartate/ornithine carbamoyltransferase superfamily. OTCase family.</text>
</comment>